<reference key="1">
    <citation type="journal article" date="1992" name="Proc. Natl. Acad. Sci. U.S.A.">
        <title>Cloning of a rat kidney cDNA that stimulates dibasic and neutral amino acid transport and has sequence similarity to glucosidases.</title>
        <authorList>
            <person name="Wells R.G."/>
            <person name="Hediger M.A."/>
        </authorList>
    </citation>
    <scope>NUCLEOTIDE SEQUENCE [MRNA]</scope>
    <scope>FUNCTION</scope>
    <scope>TISSUE SPECIFICITY</scope>
    <source>
        <strain>Sprague-Dawley</strain>
        <tissue>Kidney cortex</tissue>
    </source>
</reference>
<reference key="2">
    <citation type="journal article" date="1992" name="Proc. Natl. Acad. Sci. U.S.A.">
        <title>Expression cloning of a Na(+)-independent neutral amino acid transporter from rat kidney.</title>
        <authorList>
            <person name="Tate S.S."/>
            <person name="Yan N."/>
            <person name="Udenfriend S."/>
        </authorList>
    </citation>
    <scope>NUCLEOTIDE SEQUENCE [MRNA]</scope>
    <scope>FUNCTION</scope>
    <scope>TISSUE SPECIFICITY</scope>
    <source>
        <tissue>Kidney</tissue>
    </source>
</reference>
<reference key="3">
    <citation type="journal article" date="2004" name="Genome Res.">
        <title>The status, quality, and expansion of the NIH full-length cDNA project: the Mammalian Gene Collection (MGC).</title>
        <authorList>
            <consortium name="The MGC Project Team"/>
        </authorList>
    </citation>
    <scope>NUCLEOTIDE SEQUENCE [LARGE SCALE MRNA]</scope>
    <source>
        <tissue>Kidney</tissue>
    </source>
</reference>
<reference key="4">
    <citation type="journal article" date="1994" name="Proc. Natl. Acad. Sci. U.S.A.">
        <title>Characterization of the promoter region of the gene for the rat neutral and basic amino acid transporter and chromosomal localization of the human gene.</title>
        <authorList>
            <person name="Yan N."/>
            <person name="Mosckovitz R."/>
            <person name="Gerber L.D."/>
            <person name="Mathew S."/>
            <person name="Murty V.V.V.S."/>
            <person name="Tate S.S."/>
            <person name="Udenfriend S."/>
        </authorList>
    </citation>
    <scope>NUCLEOTIDE SEQUENCE OF 1-140</scope>
    <source>
        <strain>Sprague-Dawley</strain>
        <tissue>Liver</tissue>
    </source>
</reference>
<reference key="5">
    <citation type="journal article" date="1999" name="J. Biol. Chem.">
        <title>Identification of an amino acid transporter associated with the cystinuria-related type II membrane glycoprotein.</title>
        <authorList>
            <person name="Chairoungdua A."/>
            <person name="Segawa H."/>
            <person name="Kim J.Y."/>
            <person name="Miyamoto K."/>
            <person name="Haga H."/>
            <person name="Fukui Y."/>
            <person name="Mizoguchi K."/>
            <person name="Ito H."/>
            <person name="Takeda E."/>
            <person name="Endou H."/>
            <person name="Kanai Y."/>
        </authorList>
    </citation>
    <scope>SUBUNIT</scope>
    <scope>TISSUE SPECIFICITY</scope>
</reference>
<reference key="6">
    <citation type="journal article" date="2012" name="Nat. Commun.">
        <title>Quantitative maps of protein phosphorylation sites across 14 different rat organs and tissues.</title>
        <authorList>
            <person name="Lundby A."/>
            <person name="Secher A."/>
            <person name="Lage K."/>
            <person name="Nordsborg N.B."/>
            <person name="Dmytriyev A."/>
            <person name="Lundby C."/>
            <person name="Olsen J.V."/>
        </authorList>
    </citation>
    <scope>PHOSPHORYLATION [LARGE SCALE ANALYSIS] AT SER-10 AND SER-383</scope>
    <scope>IDENTIFICATION BY MASS SPECTROMETRY [LARGE SCALE ANALYSIS]</scope>
</reference>
<sequence>MNEDKDKRDSIQMSMKGCRTNNGFVQNEDIQEQDPDSRDTPQSNAVSIPAPEEPQLKVVRPYAGMPKEVLFQFSGQARYRVPREILFWLTVVSVFLLIGATIAIIIISPKCLDWWQAGPMYQIYPRSFKDSDKDGNGDLKGIQEKLDYITALNIKTIWITSFYKSPLKDFRYAVEDFKEIDPIFGTMKDFENLVAAVHDKGLKLIIDFIPNHTSDKHPWFQSSRTRSGKYTDYYIWHNCTHANGVTTPPNNWLSVYGNSSWQFDEERKQCYFHQFLKEQPDLNFRNPAVQEEIKEIIKFWLSKGVDGFSFDAVKFLLEAKDLRNEIQVNTSQIPDTVTRYSELYHDFTTTQVGMHDLVRDFRQTMNQFSREPGRYRFMGTEVSAESTERTMVYYGLSFIQEADFPFNKYLATLDTLSGHTVYEAITSWMENMPEGKWPNWMIGGPETSRLTSRVGSEYVNAMNMLLFTLPGTPITYYGEEIGMGDISITNLNERYDTNALLSKSPMQWDNSSNAGFTEANHTWLPTNSDYHTVNVDVQKTQPSSALRLYQDLSLLHARELLLSRGWFCLLRDDNHSVVYTRELDGIDKVFLVVLNFGESSTVLNLQETISDVPTKLRIRLSTNPASKGSDVDTHAVSLEKGEGLILEHSMKTLLHHQKAFRDKCFISNRACYSSVLDLLYSSC</sequence>
<name>SLC31_RAT</name>
<organism>
    <name type="scientific">Rattus norvegicus</name>
    <name type="common">Rat</name>
    <dbReference type="NCBI Taxonomy" id="10116"/>
    <lineage>
        <taxon>Eukaryota</taxon>
        <taxon>Metazoa</taxon>
        <taxon>Chordata</taxon>
        <taxon>Craniata</taxon>
        <taxon>Vertebrata</taxon>
        <taxon>Euteleostomi</taxon>
        <taxon>Mammalia</taxon>
        <taxon>Eutheria</taxon>
        <taxon>Euarchontoglires</taxon>
        <taxon>Glires</taxon>
        <taxon>Rodentia</taxon>
        <taxon>Myomorpha</taxon>
        <taxon>Muroidea</taxon>
        <taxon>Muridae</taxon>
        <taxon>Murinae</taxon>
        <taxon>Rattus</taxon>
    </lineage>
</organism>
<keyword id="KW-0029">Amino-acid transport</keyword>
<keyword id="KW-0106">Calcium</keyword>
<keyword id="KW-1003">Cell membrane</keyword>
<keyword id="KW-1015">Disulfide bond</keyword>
<keyword id="KW-0325">Glycoprotein</keyword>
<keyword id="KW-0472">Membrane</keyword>
<keyword id="KW-0479">Metal-binding</keyword>
<keyword id="KW-0597">Phosphoprotein</keyword>
<keyword id="KW-1185">Reference proteome</keyword>
<keyword id="KW-0735">Signal-anchor</keyword>
<keyword id="KW-0812">Transmembrane</keyword>
<keyword id="KW-1133">Transmembrane helix</keyword>
<keyword id="KW-0813">Transport</keyword>
<dbReference type="EMBL" id="M80804">
    <property type="protein sequence ID" value="AAA73144.1"/>
    <property type="molecule type" value="mRNA"/>
</dbReference>
<dbReference type="EMBL" id="M77345">
    <property type="protein sequence ID" value="AAA41544.1"/>
    <property type="molecule type" value="mRNA"/>
</dbReference>
<dbReference type="EMBL" id="BC078852">
    <property type="protein sequence ID" value="AAH78852.1"/>
    <property type="molecule type" value="mRNA"/>
</dbReference>
<dbReference type="EMBL" id="U10110">
    <property type="protein sequence ID" value="AAA20394.1"/>
    <property type="molecule type" value="Unassigned_DNA"/>
</dbReference>
<dbReference type="PIR" id="A41785">
    <property type="entry name" value="A41785"/>
</dbReference>
<dbReference type="RefSeq" id="NP_058912.1">
    <property type="nucleotide sequence ID" value="NM_017216.1"/>
</dbReference>
<dbReference type="SMR" id="Q64319"/>
<dbReference type="FunCoup" id="Q64319">
    <property type="interactions" value="87"/>
</dbReference>
<dbReference type="STRING" id="10116.ENSRNOP00000009581"/>
<dbReference type="CAZy" id="GH13">
    <property type="family name" value="Glycoside Hydrolase Family 13"/>
</dbReference>
<dbReference type="GlyCosmos" id="Q64319">
    <property type="glycosylation" value="7 sites, No reported glycans"/>
</dbReference>
<dbReference type="GlyGen" id="Q64319">
    <property type="glycosylation" value="7 sites"/>
</dbReference>
<dbReference type="iPTMnet" id="Q64319"/>
<dbReference type="PhosphoSitePlus" id="Q64319"/>
<dbReference type="PaxDb" id="10116-ENSRNOP00000009581"/>
<dbReference type="Ensembl" id="ENSRNOT00000009581.5">
    <property type="protein sequence ID" value="ENSRNOP00000009581.2"/>
    <property type="gene ID" value="ENSRNOG00000007006.5"/>
</dbReference>
<dbReference type="GeneID" id="29484"/>
<dbReference type="KEGG" id="rno:29484"/>
<dbReference type="UCSC" id="RGD:3709">
    <property type="organism name" value="rat"/>
</dbReference>
<dbReference type="AGR" id="RGD:3709"/>
<dbReference type="CTD" id="6519"/>
<dbReference type="RGD" id="3709">
    <property type="gene designation" value="Slc3a1"/>
</dbReference>
<dbReference type="eggNOG" id="KOG0471">
    <property type="taxonomic scope" value="Eukaryota"/>
</dbReference>
<dbReference type="GeneTree" id="ENSGT00940000158103"/>
<dbReference type="HOGENOM" id="CLU_006462_8_0_1"/>
<dbReference type="InParanoid" id="Q64319"/>
<dbReference type="OMA" id="PNGEKWA"/>
<dbReference type="OrthoDB" id="1740265at2759"/>
<dbReference type="PhylomeDB" id="Q64319"/>
<dbReference type="TreeFam" id="TF314498"/>
<dbReference type="Reactome" id="R-RNO-352230">
    <property type="pathway name" value="Amino acid transport across the plasma membrane"/>
</dbReference>
<dbReference type="PRO" id="PR:Q64319"/>
<dbReference type="Proteomes" id="UP000002494">
    <property type="component" value="Chromosome 6"/>
</dbReference>
<dbReference type="Bgee" id="ENSRNOG00000007006">
    <property type="expression patterns" value="Expressed in kidney and 20 other cell types or tissues"/>
</dbReference>
<dbReference type="GO" id="GO:0016324">
    <property type="term" value="C:apical plasma membrane"/>
    <property type="evidence" value="ECO:0000266"/>
    <property type="project" value="RGD"/>
</dbReference>
<dbReference type="GO" id="GO:0031526">
    <property type="term" value="C:brush border membrane"/>
    <property type="evidence" value="ECO:0000266"/>
    <property type="project" value="RGD"/>
</dbReference>
<dbReference type="GO" id="GO:0005774">
    <property type="term" value="C:vacuolar membrane"/>
    <property type="evidence" value="ECO:0000314"/>
    <property type="project" value="RGD"/>
</dbReference>
<dbReference type="GO" id="GO:0046872">
    <property type="term" value="F:metal ion binding"/>
    <property type="evidence" value="ECO:0007669"/>
    <property type="project" value="UniProtKB-KW"/>
</dbReference>
<dbReference type="GO" id="GO:0046982">
    <property type="term" value="F:protein heterodimerization activity"/>
    <property type="evidence" value="ECO:0000266"/>
    <property type="project" value="RGD"/>
</dbReference>
<dbReference type="GO" id="GO:0044877">
    <property type="term" value="F:protein-containing complex binding"/>
    <property type="evidence" value="ECO:0000314"/>
    <property type="project" value="RGD"/>
</dbReference>
<dbReference type="GO" id="GO:0006865">
    <property type="term" value="P:amino acid transport"/>
    <property type="evidence" value="ECO:0000314"/>
    <property type="project" value="RGD"/>
</dbReference>
<dbReference type="GO" id="GO:0015810">
    <property type="term" value="P:aspartate transmembrane transport"/>
    <property type="evidence" value="ECO:0000266"/>
    <property type="project" value="RGD"/>
</dbReference>
<dbReference type="GO" id="GO:0005975">
    <property type="term" value="P:carbohydrate metabolic process"/>
    <property type="evidence" value="ECO:0007669"/>
    <property type="project" value="InterPro"/>
</dbReference>
<dbReference type="GO" id="GO:0010467">
    <property type="term" value="P:gene expression"/>
    <property type="evidence" value="ECO:0000266"/>
    <property type="project" value="RGD"/>
</dbReference>
<dbReference type="GO" id="GO:0015811">
    <property type="term" value="P:L-cystine transport"/>
    <property type="evidence" value="ECO:0000266"/>
    <property type="project" value="RGD"/>
</dbReference>
<dbReference type="GO" id="GO:0015813">
    <property type="term" value="P:L-glutamate transmembrane transport"/>
    <property type="evidence" value="ECO:0000266"/>
    <property type="project" value="RGD"/>
</dbReference>
<dbReference type="CDD" id="cd11359">
    <property type="entry name" value="AmyAc_SLC3A1"/>
    <property type="match status" value="1"/>
</dbReference>
<dbReference type="FunFam" id="3.90.400.10:FF:000001">
    <property type="entry name" value="Maltase A3, isoform A"/>
    <property type="match status" value="1"/>
</dbReference>
<dbReference type="FunFam" id="2.60.40.1180:FF:000026">
    <property type="entry name" value="Solute carrier family 3 (amino acid transporter heavy chain), member 1"/>
    <property type="match status" value="1"/>
</dbReference>
<dbReference type="Gene3D" id="3.20.20.80">
    <property type="entry name" value="Glycosidases"/>
    <property type="match status" value="1"/>
</dbReference>
<dbReference type="Gene3D" id="2.60.40.1180">
    <property type="entry name" value="Golgi alpha-mannosidase II"/>
    <property type="match status" value="1"/>
</dbReference>
<dbReference type="Gene3D" id="3.90.400.10">
    <property type="entry name" value="Oligo-1,6-glucosidase, Domain 2"/>
    <property type="match status" value="1"/>
</dbReference>
<dbReference type="InterPro" id="IPR006047">
    <property type="entry name" value="Glyco_hydro_13_cat_dom"/>
</dbReference>
<dbReference type="InterPro" id="IPR013780">
    <property type="entry name" value="Glyco_hydro_b"/>
</dbReference>
<dbReference type="InterPro" id="IPR017853">
    <property type="entry name" value="Glycoside_hydrolase_SF"/>
</dbReference>
<dbReference type="InterPro" id="IPR045857">
    <property type="entry name" value="O16G_dom_2"/>
</dbReference>
<dbReference type="PANTHER" id="PTHR10357">
    <property type="entry name" value="ALPHA-AMYLASE FAMILY MEMBER"/>
    <property type="match status" value="1"/>
</dbReference>
<dbReference type="PANTHER" id="PTHR10357:SF179">
    <property type="entry name" value="NEUTRAL AND BASIC AMINO ACID TRANSPORT PROTEIN RBAT"/>
    <property type="match status" value="1"/>
</dbReference>
<dbReference type="Pfam" id="PF00128">
    <property type="entry name" value="Alpha-amylase"/>
    <property type="match status" value="1"/>
</dbReference>
<dbReference type="SMART" id="SM00642">
    <property type="entry name" value="Aamy"/>
    <property type="match status" value="1"/>
</dbReference>
<dbReference type="SUPFAM" id="SSF51445">
    <property type="entry name" value="(Trans)glycosidases"/>
    <property type="match status" value="1"/>
</dbReference>
<proteinExistence type="evidence at protein level"/>
<evidence type="ECO:0000250" key="1">
    <source>
        <dbReference type="UniProtKB" id="Q07837"/>
    </source>
</evidence>
<evidence type="ECO:0000250" key="2">
    <source>
        <dbReference type="UniProtKB" id="Q91WV7"/>
    </source>
</evidence>
<evidence type="ECO:0000255" key="3"/>
<evidence type="ECO:0000256" key="4">
    <source>
        <dbReference type="SAM" id="MobiDB-lite"/>
    </source>
</evidence>
<evidence type="ECO:0000269" key="5">
    <source>
    </source>
</evidence>
<evidence type="ECO:0000269" key="6">
    <source>
    </source>
</evidence>
<evidence type="ECO:0000269" key="7">
    <source>
    </source>
</evidence>
<evidence type="ECO:0000303" key="8">
    <source>
    </source>
</evidence>
<evidence type="ECO:0000303" key="9">
    <source>
    </source>
</evidence>
<evidence type="ECO:0000303" key="10">
    <source>
    </source>
</evidence>
<evidence type="ECO:0000303" key="11">
    <source>
    </source>
</evidence>
<evidence type="ECO:0007744" key="12">
    <source>
    </source>
</evidence>
<comment type="function">
    <text evidence="1 2 6 7">Acts as a chaperone that facilitates biogenesis and trafficking of functional transporter heteromers to the plasma membrane (By similarity) (PubMed:1376924, PubMed:1729674). Associates with SLC7A9 to form a functional transporter complex that mediates the electrogenic exchange between cationic amino acids and neutral amino acids, with a stoichiometry of 1:1. SLC7A9-SLC3A1 transporter has system b(0,+)-like activity with high affinity for extracellular cationic amino acids and L-cystine and lower affinity for intracellular neutral amino acids. Substrate exchange is driven by high concentration of intracellular neutral amino acids and the intracellular reduction of L-cystine to L-cysteine. SLC7A9-SLC3A1 acts as a major transporter for reabsorption of L-cystine and dibasic amino acids across the brush border membrane in early proximal tubules (By similarity) (PubMed:1376924, PubMed:1729674). Associates with SLC7A13 to form a functional complex that transports anionic and neutral amino acids via exchange or facilitated diffusion. SLC7A13-SLC3A1 may act as a major transporter for L-cystine in late proximal tubules, ensuring its reabsorption from the luminal fluid in exchange for cytosolic L-glutamate or L-aspartate (By similarity).</text>
</comment>
<comment type="subunit">
    <text evidence="1 2 5">Disulfide-linked heterodimer composed of the catalytic light subunit SLC7A9 and the heavy subunit SLC3A1. The heterodimer is the minimal functional unit. Assembles in non-covalently linked heterotetramers (dimers of heterodimers) and higher order oligomers; the oligomerization is mediated by SLC3A1 likely to prevent degradation in the endoplasmic reticulum and facilitate heteromer trafficking to the plasma membrane (By similarity) (PubMed:10506124). Disulfide-linked heterodimer composed of the catalytic light subunit SLC7A13 and the heavy subunit SLC3A1 (By similarity).</text>
</comment>
<comment type="subcellular location">
    <subcellularLocation>
        <location evidence="2">Cell membrane</location>
        <topology evidence="3">Single-pass type II membrane protein</topology>
    </subcellularLocation>
    <subcellularLocation>
        <location evidence="2">Apical cell membrane</location>
        <topology evidence="3">Single-pass type II membrane protein</topology>
    </subcellularLocation>
</comment>
<comment type="tissue specificity">
    <text evidence="5 6 7">Predominantly expressed in kidney and intestine. In kidney localized to the apical membrane of the proximal tubules.</text>
</comment>
<feature type="chain" id="PRO_0000071951" description="Amino acid transporter heavy chain SLC3A1">
    <location>
        <begin position="1"/>
        <end position="683"/>
    </location>
</feature>
<feature type="topological domain" description="Cytoplasmic" evidence="3">
    <location>
        <begin position="1"/>
        <end position="86"/>
    </location>
</feature>
<feature type="transmembrane region" description="Helical; Signal-anchor for type II membrane protein" evidence="3">
    <location>
        <begin position="87"/>
        <end position="107"/>
    </location>
</feature>
<feature type="topological domain" description="Extracellular" evidence="3">
    <location>
        <begin position="108"/>
        <end position="683"/>
    </location>
</feature>
<feature type="region of interest" description="Disordered" evidence="4">
    <location>
        <begin position="1"/>
        <end position="50"/>
    </location>
</feature>
<feature type="compositionally biased region" description="Basic and acidic residues" evidence="4">
    <location>
        <begin position="1"/>
        <end position="10"/>
    </location>
</feature>
<feature type="binding site" evidence="1">
    <location>
        <position position="211"/>
    </location>
    <ligand>
        <name>Ca(2+)</name>
        <dbReference type="ChEBI" id="CHEBI:29108"/>
    </ligand>
</feature>
<feature type="binding site" evidence="1">
    <location>
        <position position="281"/>
    </location>
    <ligand>
        <name>Ca(2+)</name>
        <dbReference type="ChEBI" id="CHEBI:29108"/>
    </ligand>
</feature>
<feature type="binding site" evidence="1">
    <location>
        <position position="315"/>
    </location>
    <ligand>
        <name>Ca(2+)</name>
        <dbReference type="ChEBI" id="CHEBI:29108"/>
    </ligand>
</feature>
<feature type="binding site" evidence="1">
    <location>
        <position position="316"/>
    </location>
    <ligand>
        <name>Ca(2+)</name>
        <dbReference type="ChEBI" id="CHEBI:29108"/>
    </ligand>
</feature>
<feature type="binding site" evidence="1">
    <location>
        <position position="318"/>
    </location>
    <ligand>
        <name>Ca(2+)</name>
        <dbReference type="ChEBI" id="CHEBI:29108"/>
    </ligand>
</feature>
<feature type="modified residue" description="Phosphoserine" evidence="12">
    <location>
        <position position="10"/>
    </location>
</feature>
<feature type="modified residue" description="Phosphoserine" evidence="12">
    <location>
        <position position="383"/>
    </location>
</feature>
<feature type="glycosylation site" description="N-linked (GlcNAc...) asparagine" evidence="3">
    <location>
        <position position="211"/>
    </location>
</feature>
<feature type="glycosylation site" description="N-linked (GlcNAc...) asparagine" evidence="3">
    <location>
        <position position="238"/>
    </location>
</feature>
<feature type="glycosylation site" description="N-linked (GlcNAc...) asparagine" evidence="3">
    <location>
        <position position="258"/>
    </location>
</feature>
<feature type="glycosylation site" description="N-linked (GlcNAc...) asparagine" evidence="3">
    <location>
        <position position="329"/>
    </location>
</feature>
<feature type="glycosylation site" description="N-linked (GlcNAc...) asparagine" evidence="3">
    <location>
        <position position="510"/>
    </location>
</feature>
<feature type="glycosylation site" description="N-linked (GlcNAc...) asparagine" evidence="3">
    <location>
        <position position="520"/>
    </location>
</feature>
<feature type="glycosylation site" description="N-linked (GlcNAc...) asparagine" evidence="3">
    <location>
        <position position="574"/>
    </location>
</feature>
<feature type="disulfide bond" description="Interchain (with C-144 in SLC7A5)" evidence="1">
    <location>
        <position position="111"/>
    </location>
</feature>
<feature type="disulfide bond" evidence="1">
    <location>
        <begin position="239"/>
        <end position="270"/>
    </location>
</feature>
<feature type="disulfide bond" evidence="1">
    <location>
        <begin position="568"/>
        <end position="664"/>
    </location>
</feature>
<feature type="disulfide bond" evidence="1">
    <location>
        <begin position="671"/>
        <end position="683"/>
    </location>
</feature>
<accession>Q64319</accession>
<accession>Q62672</accession>
<gene>
    <name type="primary">Slc3a1</name>
    <name type="synonym">Nbat</name>
</gene>
<protein>
    <recommendedName>
        <fullName>Amino acid transporter heavy chain SLC3A1</fullName>
    </recommendedName>
    <alternativeName>
        <fullName evidence="9">D2</fullName>
    </alternativeName>
    <alternativeName>
        <fullName evidence="11">Neutral and basic amino acid transport protein</fullName>
        <shortName evidence="11">NBAT</shortName>
    </alternativeName>
    <alternativeName>
        <fullName>Solute carrier family 3 member 1</fullName>
    </alternativeName>
    <alternativeName>
        <fullName>b(0,+)-type amino acid transporter-related heavy chain</fullName>
        <shortName evidence="10">NAA-TR</shortName>
        <shortName evidence="8">rBAT</shortName>
    </alternativeName>
</protein>